<gene>
    <name type="primary">MRH4</name>
    <name type="ORF">LELG_04846</name>
</gene>
<feature type="transit peptide" description="Mitochondrion" evidence="2">
    <location>
        <begin position="1"/>
        <end position="71"/>
    </location>
</feature>
<feature type="chain" id="PRO_0000294673" description="ATP-dependent RNA helicase MRH4, mitochondrial">
    <location>
        <begin position="72"/>
        <end position="603"/>
    </location>
</feature>
<feature type="domain" description="Helicase ATP-binding" evidence="3">
    <location>
        <begin position="193"/>
        <end position="409"/>
    </location>
</feature>
<feature type="domain" description="Helicase C-terminal" evidence="4">
    <location>
        <begin position="443"/>
        <end position="603"/>
    </location>
</feature>
<feature type="short sequence motif" description="Q motif">
    <location>
        <begin position="151"/>
        <end position="158"/>
    </location>
</feature>
<feature type="short sequence motif" description="DEAD box">
    <location>
        <begin position="357"/>
        <end position="360"/>
    </location>
</feature>
<feature type="binding site" evidence="3">
    <location>
        <begin position="206"/>
        <end position="213"/>
    </location>
    <ligand>
        <name>ATP</name>
        <dbReference type="ChEBI" id="CHEBI:30616"/>
    </ligand>
</feature>
<sequence length="603" mass="67375">MISTGLPLFTLSKICHNCFFKQTRSLSRYSSKDKVKGRRRLLPRPNTEKFNSARSGVGVGVGNGAGAGARVGVGAGAGSVAAKVFESGNFSQLHNNGLSKQAQTAGLDLKQKITSFDQLKVFPSVREAMIKEIKSQYNLKGPQHSSIDDVVIKPTPVQIAAIRKINQTRKIKVAKNLDEMSEGERIQIELQTKNEEQKTKIFTVAAETGSGKTWAYLANIMSKLKEDDYKWFNQSPEAYNSFKSSEQVRSVILLPTHELVEQVYETLKRANSFLLEYENVPLQYKEFLNLPEHHTLGLSIAKLSHGDAPINVYKQLRNRGKIDILITTPGKITSFSKLESIDRPFKIFKSIRYCVIDEADTLFDDSFLKDTTAVVKNFPKLLDLILVSATIPKEFEKTLLRLFPDQKSLIRVATPSLHKISKNIKVMTLDADLAPYNGSKTRCLAQAIYAISKDGTEHNHVKRIIIFVNEKAEVDGLVDLLQSKYHIRREDICGISGSVNVGDRKDYLEPFLKPAQLLEDDVDQSKIKILVTTDLLARGMNFIGIKNVILMGLPKSSVELVHRLGRTGRMNQLGRVFIIVDKKSRKSWVKGLGSAIMKGSRIG</sequence>
<organism>
    <name type="scientific">Lodderomyces elongisporus (strain ATCC 11503 / CBS 2605 / JCM 1781 / NBRC 1676 / NRRL YB-4239)</name>
    <name type="common">Yeast</name>
    <name type="synonym">Saccharomyces elongisporus</name>
    <dbReference type="NCBI Taxonomy" id="379508"/>
    <lineage>
        <taxon>Eukaryota</taxon>
        <taxon>Fungi</taxon>
        <taxon>Dikarya</taxon>
        <taxon>Ascomycota</taxon>
        <taxon>Saccharomycotina</taxon>
        <taxon>Pichiomycetes</taxon>
        <taxon>Debaryomycetaceae</taxon>
        <taxon>Candida/Lodderomyces clade</taxon>
        <taxon>Lodderomyces</taxon>
    </lineage>
</organism>
<accession>A5E5F7</accession>
<name>MRH4_LODEL</name>
<dbReference type="EC" id="3.6.4.13"/>
<dbReference type="EMBL" id="CH981530">
    <property type="protein sequence ID" value="EDK46665.1"/>
    <property type="molecule type" value="Genomic_DNA"/>
</dbReference>
<dbReference type="RefSeq" id="XP_001524033.1">
    <property type="nucleotide sequence ID" value="XM_001523983.1"/>
</dbReference>
<dbReference type="SMR" id="A5E5F7"/>
<dbReference type="FunCoup" id="A5E5F7">
    <property type="interactions" value="131"/>
</dbReference>
<dbReference type="STRING" id="379508.A5E5F7"/>
<dbReference type="GeneID" id="5231117"/>
<dbReference type="KEGG" id="lel:PVL30_005572"/>
<dbReference type="VEuPathDB" id="FungiDB:LELG_04846"/>
<dbReference type="eggNOG" id="KOG0335">
    <property type="taxonomic scope" value="Eukaryota"/>
</dbReference>
<dbReference type="HOGENOM" id="CLU_003041_18_0_1"/>
<dbReference type="InParanoid" id="A5E5F7"/>
<dbReference type="OMA" id="HSTIDFI"/>
<dbReference type="OrthoDB" id="10256233at2759"/>
<dbReference type="Proteomes" id="UP000001996">
    <property type="component" value="Unassembled WGS sequence"/>
</dbReference>
<dbReference type="GO" id="GO:0005739">
    <property type="term" value="C:mitochondrion"/>
    <property type="evidence" value="ECO:0007669"/>
    <property type="project" value="UniProtKB-SubCell"/>
</dbReference>
<dbReference type="GO" id="GO:0005524">
    <property type="term" value="F:ATP binding"/>
    <property type="evidence" value="ECO:0007669"/>
    <property type="project" value="UniProtKB-KW"/>
</dbReference>
<dbReference type="GO" id="GO:0016887">
    <property type="term" value="F:ATP hydrolysis activity"/>
    <property type="evidence" value="ECO:0007669"/>
    <property type="project" value="RHEA"/>
</dbReference>
<dbReference type="GO" id="GO:0003723">
    <property type="term" value="F:RNA binding"/>
    <property type="evidence" value="ECO:0007669"/>
    <property type="project" value="UniProtKB-KW"/>
</dbReference>
<dbReference type="GO" id="GO:0003724">
    <property type="term" value="F:RNA helicase activity"/>
    <property type="evidence" value="ECO:0007669"/>
    <property type="project" value="UniProtKB-EC"/>
</dbReference>
<dbReference type="CDD" id="cd17965">
    <property type="entry name" value="DEADc_MRH4"/>
    <property type="match status" value="1"/>
</dbReference>
<dbReference type="CDD" id="cd18787">
    <property type="entry name" value="SF2_C_DEAD"/>
    <property type="match status" value="1"/>
</dbReference>
<dbReference type="Gene3D" id="3.40.50.300">
    <property type="entry name" value="P-loop containing nucleotide triphosphate hydrolases"/>
    <property type="match status" value="2"/>
</dbReference>
<dbReference type="InterPro" id="IPR011545">
    <property type="entry name" value="DEAD/DEAH_box_helicase_dom"/>
</dbReference>
<dbReference type="InterPro" id="IPR014001">
    <property type="entry name" value="Helicase_ATP-bd"/>
</dbReference>
<dbReference type="InterPro" id="IPR001650">
    <property type="entry name" value="Helicase_C-like"/>
</dbReference>
<dbReference type="InterPro" id="IPR027417">
    <property type="entry name" value="P-loop_NTPase"/>
</dbReference>
<dbReference type="PANTHER" id="PTHR24031">
    <property type="entry name" value="RNA HELICASE"/>
    <property type="match status" value="1"/>
</dbReference>
<dbReference type="Pfam" id="PF00270">
    <property type="entry name" value="DEAD"/>
    <property type="match status" value="1"/>
</dbReference>
<dbReference type="Pfam" id="PF00271">
    <property type="entry name" value="Helicase_C"/>
    <property type="match status" value="1"/>
</dbReference>
<dbReference type="SMART" id="SM00487">
    <property type="entry name" value="DEXDc"/>
    <property type="match status" value="1"/>
</dbReference>
<dbReference type="SMART" id="SM00490">
    <property type="entry name" value="HELICc"/>
    <property type="match status" value="1"/>
</dbReference>
<dbReference type="SUPFAM" id="SSF52540">
    <property type="entry name" value="P-loop containing nucleoside triphosphate hydrolases"/>
    <property type="match status" value="1"/>
</dbReference>
<dbReference type="PROSITE" id="PS51192">
    <property type="entry name" value="HELICASE_ATP_BIND_1"/>
    <property type="match status" value="1"/>
</dbReference>
<dbReference type="PROSITE" id="PS51194">
    <property type="entry name" value="HELICASE_CTER"/>
    <property type="match status" value="1"/>
</dbReference>
<protein>
    <recommendedName>
        <fullName>ATP-dependent RNA helicase MRH4, mitochondrial</fullName>
        <ecNumber>3.6.4.13</ecNumber>
    </recommendedName>
</protein>
<proteinExistence type="inferred from homology"/>
<comment type="function">
    <text evidence="1">ATP-binding RNA helicase involved in mitochondrial RNA metabolism. Required for maintenance of mitochondrial DNA (By similarity).</text>
</comment>
<comment type="catalytic activity">
    <reaction>
        <text>ATP + H2O = ADP + phosphate + H(+)</text>
        <dbReference type="Rhea" id="RHEA:13065"/>
        <dbReference type="ChEBI" id="CHEBI:15377"/>
        <dbReference type="ChEBI" id="CHEBI:15378"/>
        <dbReference type="ChEBI" id="CHEBI:30616"/>
        <dbReference type="ChEBI" id="CHEBI:43474"/>
        <dbReference type="ChEBI" id="CHEBI:456216"/>
        <dbReference type="EC" id="3.6.4.13"/>
    </reaction>
</comment>
<comment type="subcellular location">
    <subcellularLocation>
        <location evidence="1">Mitochondrion</location>
    </subcellularLocation>
</comment>
<comment type="domain">
    <text>The Q motif is unique to and characteristic of the DEAD box family of RNA helicases and controls ATP binding and hydrolysis.</text>
</comment>
<comment type="similarity">
    <text evidence="5">Belongs to the DEAD box helicase family. MRH4 subfamily.</text>
</comment>
<keyword id="KW-0067">ATP-binding</keyword>
<keyword id="KW-0347">Helicase</keyword>
<keyword id="KW-0378">Hydrolase</keyword>
<keyword id="KW-0496">Mitochondrion</keyword>
<keyword id="KW-0547">Nucleotide-binding</keyword>
<keyword id="KW-1185">Reference proteome</keyword>
<keyword id="KW-0694">RNA-binding</keyword>
<keyword id="KW-0809">Transit peptide</keyword>
<evidence type="ECO:0000250" key="1"/>
<evidence type="ECO:0000255" key="2"/>
<evidence type="ECO:0000255" key="3">
    <source>
        <dbReference type="PROSITE-ProRule" id="PRU00541"/>
    </source>
</evidence>
<evidence type="ECO:0000255" key="4">
    <source>
        <dbReference type="PROSITE-ProRule" id="PRU00542"/>
    </source>
</evidence>
<evidence type="ECO:0000305" key="5"/>
<reference key="1">
    <citation type="journal article" date="2009" name="Nature">
        <title>Evolution of pathogenicity and sexual reproduction in eight Candida genomes.</title>
        <authorList>
            <person name="Butler G."/>
            <person name="Rasmussen M.D."/>
            <person name="Lin M.F."/>
            <person name="Santos M.A.S."/>
            <person name="Sakthikumar S."/>
            <person name="Munro C.A."/>
            <person name="Rheinbay E."/>
            <person name="Grabherr M."/>
            <person name="Forche A."/>
            <person name="Reedy J.L."/>
            <person name="Agrafioti I."/>
            <person name="Arnaud M.B."/>
            <person name="Bates S."/>
            <person name="Brown A.J.P."/>
            <person name="Brunke S."/>
            <person name="Costanzo M.C."/>
            <person name="Fitzpatrick D.A."/>
            <person name="de Groot P.W.J."/>
            <person name="Harris D."/>
            <person name="Hoyer L.L."/>
            <person name="Hube B."/>
            <person name="Klis F.M."/>
            <person name="Kodira C."/>
            <person name="Lennard N."/>
            <person name="Logue M.E."/>
            <person name="Martin R."/>
            <person name="Neiman A.M."/>
            <person name="Nikolaou E."/>
            <person name="Quail M.A."/>
            <person name="Quinn J."/>
            <person name="Santos M.C."/>
            <person name="Schmitzberger F.F."/>
            <person name="Sherlock G."/>
            <person name="Shah P."/>
            <person name="Silverstein K.A.T."/>
            <person name="Skrzypek M.S."/>
            <person name="Soll D."/>
            <person name="Staggs R."/>
            <person name="Stansfield I."/>
            <person name="Stumpf M.P.H."/>
            <person name="Sudbery P.E."/>
            <person name="Srikantha T."/>
            <person name="Zeng Q."/>
            <person name="Berman J."/>
            <person name="Berriman M."/>
            <person name="Heitman J."/>
            <person name="Gow N.A.R."/>
            <person name="Lorenz M.C."/>
            <person name="Birren B.W."/>
            <person name="Kellis M."/>
            <person name="Cuomo C.A."/>
        </authorList>
    </citation>
    <scope>NUCLEOTIDE SEQUENCE [LARGE SCALE GENOMIC DNA]</scope>
    <source>
        <strain>ATCC 11503 / BCRC 21390 / CBS 2605 / JCM 1781 / NBRC 1676 / NRRL YB-4239</strain>
    </source>
</reference>